<reference key="1">
    <citation type="journal article" date="2008" name="J. Bacteriol.">
        <title>Genome sequence of a nephritogenic and highly transformable M49 strain of Streptococcus pyogenes.</title>
        <authorList>
            <person name="McShan W.M."/>
            <person name="Ferretti J.J."/>
            <person name="Karasawa T."/>
            <person name="Suvorov A.N."/>
            <person name="Lin S."/>
            <person name="Qin B."/>
            <person name="Jia H."/>
            <person name="Kenton S."/>
            <person name="Najar F."/>
            <person name="Wu H."/>
            <person name="Scott J."/>
            <person name="Roe B.A."/>
            <person name="Savic D.J."/>
        </authorList>
    </citation>
    <scope>NUCLEOTIDE SEQUENCE [LARGE SCALE GENOMIC DNA]</scope>
    <source>
        <strain>NZ131</strain>
    </source>
</reference>
<dbReference type="EMBL" id="CP000829">
    <property type="protein sequence ID" value="ACI60422.1"/>
    <property type="molecule type" value="Genomic_DNA"/>
</dbReference>
<dbReference type="SMR" id="B5XJ54"/>
<dbReference type="KEGG" id="soz:Spy49_0066"/>
<dbReference type="HOGENOM" id="CLU_131047_2_1_9"/>
<dbReference type="Proteomes" id="UP000001039">
    <property type="component" value="Chromosome"/>
</dbReference>
<dbReference type="GO" id="GO:0022625">
    <property type="term" value="C:cytosolic large ribosomal subunit"/>
    <property type="evidence" value="ECO:0007669"/>
    <property type="project" value="TreeGrafter"/>
</dbReference>
<dbReference type="GO" id="GO:0003735">
    <property type="term" value="F:structural constituent of ribosome"/>
    <property type="evidence" value="ECO:0007669"/>
    <property type="project" value="InterPro"/>
</dbReference>
<dbReference type="GO" id="GO:0006412">
    <property type="term" value="P:translation"/>
    <property type="evidence" value="ECO:0007669"/>
    <property type="project" value="UniProtKB-UniRule"/>
</dbReference>
<dbReference type="CDD" id="cd01658">
    <property type="entry name" value="Ribosomal_L30"/>
    <property type="match status" value="1"/>
</dbReference>
<dbReference type="FunFam" id="3.30.1390.20:FF:000001">
    <property type="entry name" value="50S ribosomal protein L30"/>
    <property type="match status" value="1"/>
</dbReference>
<dbReference type="Gene3D" id="3.30.1390.20">
    <property type="entry name" value="Ribosomal protein L30, ferredoxin-like fold domain"/>
    <property type="match status" value="1"/>
</dbReference>
<dbReference type="HAMAP" id="MF_01371_B">
    <property type="entry name" value="Ribosomal_uL30_B"/>
    <property type="match status" value="1"/>
</dbReference>
<dbReference type="InterPro" id="IPR036919">
    <property type="entry name" value="Ribo_uL30_ferredoxin-like_sf"/>
</dbReference>
<dbReference type="InterPro" id="IPR005996">
    <property type="entry name" value="Ribosomal_uL30_bac-type"/>
</dbReference>
<dbReference type="InterPro" id="IPR018038">
    <property type="entry name" value="Ribosomal_uL30_CS"/>
</dbReference>
<dbReference type="InterPro" id="IPR016082">
    <property type="entry name" value="Ribosomal_uL30_ferredoxin-like"/>
</dbReference>
<dbReference type="NCBIfam" id="TIGR01308">
    <property type="entry name" value="rpmD_bact"/>
    <property type="match status" value="1"/>
</dbReference>
<dbReference type="PANTHER" id="PTHR15892:SF2">
    <property type="entry name" value="LARGE RIBOSOMAL SUBUNIT PROTEIN UL30M"/>
    <property type="match status" value="1"/>
</dbReference>
<dbReference type="PANTHER" id="PTHR15892">
    <property type="entry name" value="MITOCHONDRIAL RIBOSOMAL PROTEIN L30"/>
    <property type="match status" value="1"/>
</dbReference>
<dbReference type="Pfam" id="PF00327">
    <property type="entry name" value="Ribosomal_L30"/>
    <property type="match status" value="1"/>
</dbReference>
<dbReference type="PIRSF" id="PIRSF002211">
    <property type="entry name" value="Ribosomal_L30_bac-type"/>
    <property type="match status" value="1"/>
</dbReference>
<dbReference type="SUPFAM" id="SSF55129">
    <property type="entry name" value="Ribosomal protein L30p/L7e"/>
    <property type="match status" value="1"/>
</dbReference>
<dbReference type="PROSITE" id="PS00634">
    <property type="entry name" value="RIBOSOMAL_L30"/>
    <property type="match status" value="1"/>
</dbReference>
<gene>
    <name evidence="1" type="primary">rpmD</name>
    <name type="ordered locus">Spy49_0066</name>
</gene>
<evidence type="ECO:0000255" key="1">
    <source>
        <dbReference type="HAMAP-Rule" id="MF_01371"/>
    </source>
</evidence>
<evidence type="ECO:0000305" key="2"/>
<protein>
    <recommendedName>
        <fullName evidence="1">Large ribosomal subunit protein uL30</fullName>
    </recommendedName>
    <alternativeName>
        <fullName evidence="2">50S ribosomal protein L30</fullName>
    </alternativeName>
</protein>
<proteinExistence type="inferred from homology"/>
<keyword id="KW-0687">Ribonucleoprotein</keyword>
<keyword id="KW-0689">Ribosomal protein</keyword>
<sequence length="60" mass="6442">MAQIKITLTKSPIGRKPEQRKTVVALGLGKLNSSVVKEDNAAIRGMVTAISHLVTVEDVK</sequence>
<feature type="chain" id="PRO_1000144726" description="Large ribosomal subunit protein uL30">
    <location>
        <begin position="1"/>
        <end position="60"/>
    </location>
</feature>
<name>RL30_STRPZ</name>
<accession>B5XJ54</accession>
<comment type="subunit">
    <text evidence="1">Part of the 50S ribosomal subunit.</text>
</comment>
<comment type="similarity">
    <text evidence="1">Belongs to the universal ribosomal protein uL30 family.</text>
</comment>
<organism>
    <name type="scientific">Streptococcus pyogenes serotype M49 (strain NZ131)</name>
    <dbReference type="NCBI Taxonomy" id="471876"/>
    <lineage>
        <taxon>Bacteria</taxon>
        <taxon>Bacillati</taxon>
        <taxon>Bacillota</taxon>
        <taxon>Bacilli</taxon>
        <taxon>Lactobacillales</taxon>
        <taxon>Streptococcaceae</taxon>
        <taxon>Streptococcus</taxon>
    </lineage>
</organism>